<gene>
    <name evidence="1" type="primary">prmA</name>
    <name type="ordered locus">STH507</name>
</gene>
<protein>
    <recommendedName>
        <fullName evidence="1">Ribosomal protein L11 methyltransferase</fullName>
        <shortName evidence="1">L11 Mtase</shortName>
        <ecNumber evidence="1">2.1.1.-</ecNumber>
    </recommendedName>
</protein>
<evidence type="ECO:0000255" key="1">
    <source>
        <dbReference type="HAMAP-Rule" id="MF_00735"/>
    </source>
</evidence>
<comment type="function">
    <text evidence="1">Methylates ribosomal protein L11.</text>
</comment>
<comment type="catalytic activity">
    <reaction evidence="1">
        <text>L-lysyl-[protein] + 3 S-adenosyl-L-methionine = N(6),N(6),N(6)-trimethyl-L-lysyl-[protein] + 3 S-adenosyl-L-homocysteine + 3 H(+)</text>
        <dbReference type="Rhea" id="RHEA:54192"/>
        <dbReference type="Rhea" id="RHEA-COMP:9752"/>
        <dbReference type="Rhea" id="RHEA-COMP:13826"/>
        <dbReference type="ChEBI" id="CHEBI:15378"/>
        <dbReference type="ChEBI" id="CHEBI:29969"/>
        <dbReference type="ChEBI" id="CHEBI:57856"/>
        <dbReference type="ChEBI" id="CHEBI:59789"/>
        <dbReference type="ChEBI" id="CHEBI:61961"/>
    </reaction>
</comment>
<comment type="subcellular location">
    <subcellularLocation>
        <location evidence="1">Cytoplasm</location>
    </subcellularLocation>
</comment>
<comment type="similarity">
    <text evidence="1">Belongs to the methyltransferase superfamily. PrmA family.</text>
</comment>
<keyword id="KW-0963">Cytoplasm</keyword>
<keyword id="KW-0489">Methyltransferase</keyword>
<keyword id="KW-1185">Reference proteome</keyword>
<keyword id="KW-0949">S-adenosyl-L-methionine</keyword>
<keyword id="KW-0808">Transferase</keyword>
<name>PRMA_SYMTH</name>
<reference key="1">
    <citation type="journal article" date="2004" name="Nucleic Acids Res.">
        <title>Genome sequence of Symbiobacterium thermophilum, an uncultivable bacterium that depends on microbial commensalism.</title>
        <authorList>
            <person name="Ueda K."/>
            <person name="Yamashita A."/>
            <person name="Ishikawa J."/>
            <person name="Shimada M."/>
            <person name="Watsuji T."/>
            <person name="Morimura K."/>
            <person name="Ikeda H."/>
            <person name="Hattori M."/>
            <person name="Beppu T."/>
        </authorList>
    </citation>
    <scope>NUCLEOTIDE SEQUENCE [LARGE SCALE GENOMIC DNA]</scope>
    <source>
        <strain>DSM 24528 / JCM 14929 / IAM 14863 / T</strain>
    </source>
</reference>
<feature type="chain" id="PRO_0000192322" description="Ribosomal protein L11 methyltransferase">
    <location>
        <begin position="1"/>
        <end position="304"/>
    </location>
</feature>
<feature type="binding site" evidence="1">
    <location>
        <position position="156"/>
    </location>
    <ligand>
        <name>S-adenosyl-L-methionine</name>
        <dbReference type="ChEBI" id="CHEBI:59789"/>
    </ligand>
</feature>
<feature type="binding site" evidence="1">
    <location>
        <position position="177"/>
    </location>
    <ligand>
        <name>S-adenosyl-L-methionine</name>
        <dbReference type="ChEBI" id="CHEBI:59789"/>
    </ligand>
</feature>
<feature type="binding site" evidence="1">
    <location>
        <position position="199"/>
    </location>
    <ligand>
        <name>S-adenosyl-L-methionine</name>
        <dbReference type="ChEBI" id="CHEBI:59789"/>
    </ligand>
</feature>
<feature type="binding site" evidence="1">
    <location>
        <position position="240"/>
    </location>
    <ligand>
        <name>S-adenosyl-L-methionine</name>
        <dbReference type="ChEBI" id="CHEBI:59789"/>
    </ligand>
</feature>
<accession>Q67S51</accession>
<proteinExistence type="inferred from homology"/>
<sequence>MRYLEIRIRCQRAAADAVGNLLLTLTGAGYAVDDPLIVEQNRSRWDMTDLPPGDPEWVTVSGWLPEAGDVEQQRLRLETGLDEIRSLGLGAVDPARFRWVEEEDWAHAWKAYFRPTRVGDRLVVVPAWEEYAPQEGELPIRIDPGMAFGTGTHATTALCMRWLEELVTPGSRVIDVGTGSGILAVAAKHLGAAEVVAIDVDPVAVDAARENAGRNGVEIDVRLATLDQVAEGEADLIVANIIASVIVDILPDVASRLKPGGRFLASGIIAARKEAVTEAMTDAWLLPVGAREQDGWVAILAMKP</sequence>
<organism>
    <name type="scientific">Symbiobacterium thermophilum (strain DSM 24528 / JCM 14929 / IAM 14863 / T)</name>
    <dbReference type="NCBI Taxonomy" id="292459"/>
    <lineage>
        <taxon>Bacteria</taxon>
        <taxon>Bacillati</taxon>
        <taxon>Bacillota</taxon>
        <taxon>Clostridia</taxon>
        <taxon>Eubacteriales</taxon>
        <taxon>Symbiobacteriaceae</taxon>
        <taxon>Symbiobacterium</taxon>
    </lineage>
</organism>
<dbReference type="EC" id="2.1.1.-" evidence="1"/>
<dbReference type="EMBL" id="AP006840">
    <property type="protein sequence ID" value="BAD39492.1"/>
    <property type="molecule type" value="Genomic_DNA"/>
</dbReference>
<dbReference type="RefSeq" id="WP_011194641.1">
    <property type="nucleotide sequence ID" value="NC_006177.1"/>
</dbReference>
<dbReference type="SMR" id="Q67S51"/>
<dbReference type="STRING" id="292459.STH507"/>
<dbReference type="KEGG" id="sth:STH507"/>
<dbReference type="eggNOG" id="COG2264">
    <property type="taxonomic scope" value="Bacteria"/>
</dbReference>
<dbReference type="HOGENOM" id="CLU_049382_0_1_9"/>
<dbReference type="OrthoDB" id="9785995at2"/>
<dbReference type="Proteomes" id="UP000000417">
    <property type="component" value="Chromosome"/>
</dbReference>
<dbReference type="GO" id="GO:0005737">
    <property type="term" value="C:cytoplasm"/>
    <property type="evidence" value="ECO:0007669"/>
    <property type="project" value="UniProtKB-SubCell"/>
</dbReference>
<dbReference type="GO" id="GO:0016279">
    <property type="term" value="F:protein-lysine N-methyltransferase activity"/>
    <property type="evidence" value="ECO:0007669"/>
    <property type="project" value="RHEA"/>
</dbReference>
<dbReference type="GO" id="GO:0032259">
    <property type="term" value="P:methylation"/>
    <property type="evidence" value="ECO:0007669"/>
    <property type="project" value="UniProtKB-KW"/>
</dbReference>
<dbReference type="CDD" id="cd02440">
    <property type="entry name" value="AdoMet_MTases"/>
    <property type="match status" value="1"/>
</dbReference>
<dbReference type="Gene3D" id="3.40.50.150">
    <property type="entry name" value="Vaccinia Virus protein VP39"/>
    <property type="match status" value="1"/>
</dbReference>
<dbReference type="HAMAP" id="MF_00735">
    <property type="entry name" value="Methyltr_PrmA"/>
    <property type="match status" value="1"/>
</dbReference>
<dbReference type="InterPro" id="IPR050078">
    <property type="entry name" value="Ribosomal_L11_MeTrfase_PrmA"/>
</dbReference>
<dbReference type="InterPro" id="IPR004498">
    <property type="entry name" value="Ribosomal_PrmA_MeTrfase"/>
</dbReference>
<dbReference type="InterPro" id="IPR029063">
    <property type="entry name" value="SAM-dependent_MTases_sf"/>
</dbReference>
<dbReference type="NCBIfam" id="TIGR00406">
    <property type="entry name" value="prmA"/>
    <property type="match status" value="1"/>
</dbReference>
<dbReference type="PANTHER" id="PTHR43648">
    <property type="entry name" value="ELECTRON TRANSFER FLAVOPROTEIN BETA SUBUNIT LYSINE METHYLTRANSFERASE"/>
    <property type="match status" value="1"/>
</dbReference>
<dbReference type="PANTHER" id="PTHR43648:SF1">
    <property type="entry name" value="ELECTRON TRANSFER FLAVOPROTEIN BETA SUBUNIT LYSINE METHYLTRANSFERASE"/>
    <property type="match status" value="1"/>
</dbReference>
<dbReference type="Pfam" id="PF06325">
    <property type="entry name" value="PrmA"/>
    <property type="match status" value="1"/>
</dbReference>
<dbReference type="PIRSF" id="PIRSF000401">
    <property type="entry name" value="RPL11_MTase"/>
    <property type="match status" value="1"/>
</dbReference>
<dbReference type="SUPFAM" id="SSF53335">
    <property type="entry name" value="S-adenosyl-L-methionine-dependent methyltransferases"/>
    <property type="match status" value="1"/>
</dbReference>